<sequence>MRHPLVMGNWKLNGSRHMVHELVSNLRKELAGVAGCAVAIAPPEMYIDMAKREAEGSHIMLGAQNVDLNLSGAFTGETSAAMLKDIGAQYIIIGHSERRTYHKESDELIAKKFAVLKEQGLTPVLCIGETEAENEAGKTEEVCARQIDAVLKTQGAAAFEGAVIAYEPVWAIGTGKSATPAQAQAVHKFIRDHIAKVDANIAEQVIIQYGGSVNASNAAELFAQPDIDGALVGGASLKADAFAVIVKAAEAAKQA</sequence>
<dbReference type="EC" id="5.3.1.1" evidence="1"/>
<dbReference type="EMBL" id="CP000802">
    <property type="protein sequence ID" value="ABV08328.1"/>
    <property type="molecule type" value="Genomic_DNA"/>
</dbReference>
<dbReference type="RefSeq" id="WP_001216325.1">
    <property type="nucleotide sequence ID" value="NC_009800.1"/>
</dbReference>
<dbReference type="SMR" id="A8A724"/>
<dbReference type="GeneID" id="93777979"/>
<dbReference type="KEGG" id="ecx:EcHS_A4150"/>
<dbReference type="HOGENOM" id="CLU_024251_2_1_6"/>
<dbReference type="UniPathway" id="UPA00109">
    <property type="reaction ID" value="UER00189"/>
</dbReference>
<dbReference type="UniPathway" id="UPA00138"/>
<dbReference type="GO" id="GO:0005829">
    <property type="term" value="C:cytosol"/>
    <property type="evidence" value="ECO:0007669"/>
    <property type="project" value="TreeGrafter"/>
</dbReference>
<dbReference type="GO" id="GO:0004807">
    <property type="term" value="F:triose-phosphate isomerase activity"/>
    <property type="evidence" value="ECO:0007669"/>
    <property type="project" value="UniProtKB-UniRule"/>
</dbReference>
<dbReference type="GO" id="GO:0006094">
    <property type="term" value="P:gluconeogenesis"/>
    <property type="evidence" value="ECO:0007669"/>
    <property type="project" value="UniProtKB-UniRule"/>
</dbReference>
<dbReference type="GO" id="GO:0046166">
    <property type="term" value="P:glyceraldehyde-3-phosphate biosynthetic process"/>
    <property type="evidence" value="ECO:0007669"/>
    <property type="project" value="TreeGrafter"/>
</dbReference>
<dbReference type="GO" id="GO:0019563">
    <property type="term" value="P:glycerol catabolic process"/>
    <property type="evidence" value="ECO:0007669"/>
    <property type="project" value="TreeGrafter"/>
</dbReference>
<dbReference type="GO" id="GO:0006096">
    <property type="term" value="P:glycolytic process"/>
    <property type="evidence" value="ECO:0007669"/>
    <property type="project" value="UniProtKB-UniRule"/>
</dbReference>
<dbReference type="CDD" id="cd00311">
    <property type="entry name" value="TIM"/>
    <property type="match status" value="1"/>
</dbReference>
<dbReference type="FunFam" id="3.20.20.70:FF:000020">
    <property type="entry name" value="Triosephosphate isomerase"/>
    <property type="match status" value="1"/>
</dbReference>
<dbReference type="Gene3D" id="3.20.20.70">
    <property type="entry name" value="Aldolase class I"/>
    <property type="match status" value="1"/>
</dbReference>
<dbReference type="HAMAP" id="MF_00147_B">
    <property type="entry name" value="TIM_B"/>
    <property type="match status" value="1"/>
</dbReference>
<dbReference type="InterPro" id="IPR013785">
    <property type="entry name" value="Aldolase_TIM"/>
</dbReference>
<dbReference type="InterPro" id="IPR035990">
    <property type="entry name" value="TIM_sf"/>
</dbReference>
<dbReference type="InterPro" id="IPR022896">
    <property type="entry name" value="TrioseP_Isoase_bac/euk"/>
</dbReference>
<dbReference type="InterPro" id="IPR000652">
    <property type="entry name" value="Triosephosphate_isomerase"/>
</dbReference>
<dbReference type="InterPro" id="IPR020861">
    <property type="entry name" value="Triosephosphate_isomerase_AS"/>
</dbReference>
<dbReference type="NCBIfam" id="TIGR00419">
    <property type="entry name" value="tim"/>
    <property type="match status" value="1"/>
</dbReference>
<dbReference type="PANTHER" id="PTHR21139">
    <property type="entry name" value="TRIOSEPHOSPHATE ISOMERASE"/>
    <property type="match status" value="1"/>
</dbReference>
<dbReference type="PANTHER" id="PTHR21139:SF42">
    <property type="entry name" value="TRIOSEPHOSPHATE ISOMERASE"/>
    <property type="match status" value="1"/>
</dbReference>
<dbReference type="Pfam" id="PF00121">
    <property type="entry name" value="TIM"/>
    <property type="match status" value="1"/>
</dbReference>
<dbReference type="SUPFAM" id="SSF51351">
    <property type="entry name" value="Triosephosphate isomerase (TIM)"/>
    <property type="match status" value="1"/>
</dbReference>
<dbReference type="PROSITE" id="PS00171">
    <property type="entry name" value="TIM_1"/>
    <property type="match status" value="1"/>
</dbReference>
<dbReference type="PROSITE" id="PS51440">
    <property type="entry name" value="TIM_2"/>
    <property type="match status" value="1"/>
</dbReference>
<gene>
    <name evidence="1" type="primary">tpiA</name>
    <name type="ordered locus">EcHS_A4150</name>
</gene>
<comment type="function">
    <text evidence="1">Involved in the gluconeogenesis. Catalyzes stereospecifically the conversion of dihydroxyacetone phosphate (DHAP) to D-glyceraldehyde-3-phosphate (G3P).</text>
</comment>
<comment type="catalytic activity">
    <reaction evidence="1">
        <text>D-glyceraldehyde 3-phosphate = dihydroxyacetone phosphate</text>
        <dbReference type="Rhea" id="RHEA:18585"/>
        <dbReference type="ChEBI" id="CHEBI:57642"/>
        <dbReference type="ChEBI" id="CHEBI:59776"/>
        <dbReference type="EC" id="5.3.1.1"/>
    </reaction>
</comment>
<comment type="pathway">
    <text evidence="1">Carbohydrate biosynthesis; gluconeogenesis.</text>
</comment>
<comment type="pathway">
    <text evidence="1">Carbohydrate degradation; glycolysis; D-glyceraldehyde 3-phosphate from glycerone phosphate: step 1/1.</text>
</comment>
<comment type="subunit">
    <text evidence="1">Homodimer.</text>
</comment>
<comment type="subcellular location">
    <subcellularLocation>
        <location evidence="1">Cytoplasm</location>
    </subcellularLocation>
</comment>
<comment type="similarity">
    <text evidence="1">Belongs to the triosephosphate isomerase family.</text>
</comment>
<proteinExistence type="inferred from homology"/>
<reference key="1">
    <citation type="journal article" date="2008" name="J. Bacteriol.">
        <title>The pangenome structure of Escherichia coli: comparative genomic analysis of E. coli commensal and pathogenic isolates.</title>
        <authorList>
            <person name="Rasko D.A."/>
            <person name="Rosovitz M.J."/>
            <person name="Myers G.S.A."/>
            <person name="Mongodin E.F."/>
            <person name="Fricke W.F."/>
            <person name="Gajer P."/>
            <person name="Crabtree J."/>
            <person name="Sebaihia M."/>
            <person name="Thomson N.R."/>
            <person name="Chaudhuri R."/>
            <person name="Henderson I.R."/>
            <person name="Sperandio V."/>
            <person name="Ravel J."/>
        </authorList>
    </citation>
    <scope>NUCLEOTIDE SEQUENCE [LARGE SCALE GENOMIC DNA]</scope>
    <source>
        <strain>HS</strain>
    </source>
</reference>
<keyword id="KW-0963">Cytoplasm</keyword>
<keyword id="KW-0312">Gluconeogenesis</keyword>
<keyword id="KW-0324">Glycolysis</keyword>
<keyword id="KW-0413">Isomerase</keyword>
<accession>A8A724</accession>
<feature type="chain" id="PRO_1000058110" description="Triosephosphate isomerase">
    <location>
        <begin position="1"/>
        <end position="255"/>
    </location>
</feature>
<feature type="active site" description="Electrophile" evidence="1">
    <location>
        <position position="95"/>
    </location>
</feature>
<feature type="active site" description="Proton acceptor" evidence="1">
    <location>
        <position position="167"/>
    </location>
</feature>
<feature type="binding site" evidence="1">
    <location>
        <begin position="9"/>
        <end position="11"/>
    </location>
    <ligand>
        <name>substrate</name>
    </ligand>
</feature>
<feature type="binding site" evidence="1">
    <location>
        <position position="173"/>
    </location>
    <ligand>
        <name>substrate</name>
    </ligand>
</feature>
<feature type="binding site" evidence="1">
    <location>
        <position position="212"/>
    </location>
    <ligand>
        <name>substrate</name>
    </ligand>
</feature>
<feature type="binding site" evidence="1">
    <location>
        <begin position="233"/>
        <end position="234"/>
    </location>
    <ligand>
        <name>substrate</name>
    </ligand>
</feature>
<evidence type="ECO:0000255" key="1">
    <source>
        <dbReference type="HAMAP-Rule" id="MF_00147"/>
    </source>
</evidence>
<protein>
    <recommendedName>
        <fullName evidence="1">Triosephosphate isomerase</fullName>
        <shortName evidence="1">TIM</shortName>
        <shortName evidence="1">TPI</shortName>
        <ecNumber evidence="1">5.3.1.1</ecNumber>
    </recommendedName>
    <alternativeName>
        <fullName evidence="1">Triose-phosphate isomerase</fullName>
    </alternativeName>
</protein>
<name>TPIS_ECOHS</name>
<organism>
    <name type="scientific">Escherichia coli O9:H4 (strain HS)</name>
    <dbReference type="NCBI Taxonomy" id="331112"/>
    <lineage>
        <taxon>Bacteria</taxon>
        <taxon>Pseudomonadati</taxon>
        <taxon>Pseudomonadota</taxon>
        <taxon>Gammaproteobacteria</taxon>
        <taxon>Enterobacterales</taxon>
        <taxon>Enterobacteriaceae</taxon>
        <taxon>Escherichia</taxon>
    </lineage>
</organism>